<comment type="subcellular location">
    <subcellularLocation>
        <location>Mitochondrion</location>
    </subcellularLocation>
    <subcellularLocation>
        <location evidence="1">Membrane</location>
        <topology evidence="1">Single-pass membrane protein</topology>
    </subcellularLocation>
</comment>
<comment type="similarity">
    <text evidence="5">Belongs to the LCL3 family.</text>
</comment>
<evidence type="ECO:0000250" key="1"/>
<evidence type="ECO:0000255" key="2"/>
<evidence type="ECO:0000255" key="3">
    <source>
        <dbReference type="PROSITE-ProRule" id="PRU00272"/>
    </source>
</evidence>
<evidence type="ECO:0000256" key="4">
    <source>
        <dbReference type="SAM" id="MobiDB-lite"/>
    </source>
</evidence>
<evidence type="ECO:0000305" key="5"/>
<accession>C1GKM1</accession>
<reference key="1">
    <citation type="journal article" date="2011" name="PLoS Genet.">
        <title>Comparative genomic analysis of human fungal pathogens causing paracoccidioidomycosis.</title>
        <authorList>
            <person name="Desjardins C.A."/>
            <person name="Champion M.D."/>
            <person name="Holder J.W."/>
            <person name="Muszewska A."/>
            <person name="Goldberg J."/>
            <person name="Bailao A.M."/>
            <person name="Brigido M.M."/>
            <person name="Ferreira M.E."/>
            <person name="Garcia A.M."/>
            <person name="Grynberg M."/>
            <person name="Gujja S."/>
            <person name="Heiman D.I."/>
            <person name="Henn M.R."/>
            <person name="Kodira C.D."/>
            <person name="Leon-Narvaez H."/>
            <person name="Longo L.V.G."/>
            <person name="Ma L.-J."/>
            <person name="Malavazi I."/>
            <person name="Matsuo A.L."/>
            <person name="Morais F.V."/>
            <person name="Pereira M."/>
            <person name="Rodriguez-Brito S."/>
            <person name="Sakthikumar S."/>
            <person name="Salem-Izacc S.M."/>
            <person name="Sykes S.M."/>
            <person name="Teixeira M.M."/>
            <person name="Vallejo M.C."/>
            <person name="Walter M.E."/>
            <person name="Yandava C."/>
            <person name="Young S."/>
            <person name="Zeng Q."/>
            <person name="Zucker J."/>
            <person name="Felipe M.S."/>
            <person name="Goldman G.H."/>
            <person name="Haas B.J."/>
            <person name="McEwen J.G."/>
            <person name="Nino-Vega G."/>
            <person name="Puccia R."/>
            <person name="San-Blas G."/>
            <person name="Soares C.M."/>
            <person name="Birren B.W."/>
            <person name="Cuomo C.A."/>
        </authorList>
    </citation>
    <scope>NUCLEOTIDE SEQUENCE [LARGE SCALE GENOMIC DNA]</scope>
    <source>
        <strain>Pb18</strain>
    </source>
</reference>
<sequence>MRWLFWSSGSQQAPNNNKDNNNNNNNNNDDDDDNNNIIIINNNINRRPPLTLECPSPSHPPCASCSTKATTFPSNPKRGWNTSLTARDWAGEFKDPRNLIPTLLLTGGILFCVRIHRQYLRRIPLATNISPTYFHKRSLFGRVTSVGDGDNFRMYHTPGGRLAGWEWLPFRRVPRVKKELKDRTIHIRLAGIDAPELPHFGRPAQPYSHAAHTWLTNYLLNKRVRAFPYRQDQYGRVVATVYVRRFPWIFLRRDVGLQMLRAGMATVYEAKSGVEFGGEGKESKYRRAEEMAKRRGRGLWKGWKGAGWESPREYKNRMAGVEGERAAAAAAAAGVGGMGELGVNGGKN</sequence>
<feature type="chain" id="PRO_0000408671" description="Probable endonuclease LCL3">
    <location>
        <begin position="1"/>
        <end position="348"/>
    </location>
</feature>
<feature type="transmembrane region" description="Helical" evidence="2">
    <location>
        <begin position="99"/>
        <end position="115"/>
    </location>
</feature>
<feature type="domain" description="TNase-like" evidence="3">
    <location>
        <begin position="137"/>
        <end position="302"/>
    </location>
</feature>
<feature type="region of interest" description="Disordered" evidence="4">
    <location>
        <begin position="1"/>
        <end position="37"/>
    </location>
</feature>
<feature type="compositionally biased region" description="Low complexity" evidence="4">
    <location>
        <begin position="15"/>
        <end position="27"/>
    </location>
</feature>
<feature type="active site" evidence="3">
    <location>
        <position position="188"/>
    </location>
</feature>
<feature type="active site" evidence="3">
    <location>
        <position position="196"/>
    </location>
</feature>
<feature type="active site" evidence="3">
    <location>
        <position position="236"/>
    </location>
</feature>
<feature type="binding site" evidence="3">
    <location>
        <position position="193"/>
    </location>
    <ligand>
        <name>Ca(2+)</name>
        <dbReference type="ChEBI" id="CHEBI:29108"/>
    </ligand>
</feature>
<proteinExistence type="inferred from homology"/>
<dbReference type="EC" id="3.1.-.-"/>
<dbReference type="EMBL" id="KN275968">
    <property type="protein sequence ID" value="EEH42987.1"/>
    <property type="molecule type" value="Genomic_DNA"/>
</dbReference>
<dbReference type="RefSeq" id="XP_010763158.1">
    <property type="nucleotide sequence ID" value="XM_010764856.1"/>
</dbReference>
<dbReference type="SMR" id="C1GKM1"/>
<dbReference type="FunCoup" id="C1GKM1">
    <property type="interactions" value="16"/>
</dbReference>
<dbReference type="STRING" id="502780.C1GKM1"/>
<dbReference type="GeneID" id="22586231"/>
<dbReference type="KEGG" id="pbn:PADG_07807"/>
<dbReference type="VEuPathDB" id="FungiDB:PADG_07807"/>
<dbReference type="eggNOG" id="ENOG502S1U4">
    <property type="taxonomic scope" value="Eukaryota"/>
</dbReference>
<dbReference type="HOGENOM" id="CLU_046484_0_1_1"/>
<dbReference type="InParanoid" id="C1GKM1"/>
<dbReference type="OMA" id="IYHTPGG"/>
<dbReference type="OrthoDB" id="26433at33183"/>
<dbReference type="Proteomes" id="UP000001628">
    <property type="component" value="Unassembled WGS sequence"/>
</dbReference>
<dbReference type="GO" id="GO:0016020">
    <property type="term" value="C:membrane"/>
    <property type="evidence" value="ECO:0007669"/>
    <property type="project" value="UniProtKB-SubCell"/>
</dbReference>
<dbReference type="GO" id="GO:0005739">
    <property type="term" value="C:mitochondrion"/>
    <property type="evidence" value="ECO:0007669"/>
    <property type="project" value="UniProtKB-SubCell"/>
</dbReference>
<dbReference type="GO" id="GO:0004519">
    <property type="term" value="F:endonuclease activity"/>
    <property type="evidence" value="ECO:0007669"/>
    <property type="project" value="UniProtKB-KW"/>
</dbReference>
<dbReference type="GO" id="GO:0046872">
    <property type="term" value="F:metal ion binding"/>
    <property type="evidence" value="ECO:0007669"/>
    <property type="project" value="UniProtKB-KW"/>
</dbReference>
<dbReference type="FunFam" id="2.40.50.90:FF:000029">
    <property type="entry name" value="Probable endonuclease lcl3"/>
    <property type="match status" value="1"/>
</dbReference>
<dbReference type="Gene3D" id="2.40.50.90">
    <property type="match status" value="1"/>
</dbReference>
<dbReference type="InterPro" id="IPR035437">
    <property type="entry name" value="SNase_OB-fold_sf"/>
</dbReference>
<dbReference type="InterPro" id="IPR016071">
    <property type="entry name" value="Staphylococal_nuclease_OB-fold"/>
</dbReference>
<dbReference type="PANTHER" id="PTHR12302">
    <property type="entry name" value="EBNA2 BINDING PROTEIN P100"/>
    <property type="match status" value="1"/>
</dbReference>
<dbReference type="PANTHER" id="PTHR12302:SF3">
    <property type="entry name" value="SERINE_THREONINE-PROTEIN KINASE 31"/>
    <property type="match status" value="1"/>
</dbReference>
<dbReference type="Pfam" id="PF00565">
    <property type="entry name" value="SNase"/>
    <property type="match status" value="1"/>
</dbReference>
<dbReference type="SMART" id="SM00318">
    <property type="entry name" value="SNc"/>
    <property type="match status" value="1"/>
</dbReference>
<dbReference type="SUPFAM" id="SSF50199">
    <property type="entry name" value="Staphylococcal nuclease"/>
    <property type="match status" value="1"/>
</dbReference>
<dbReference type="PROSITE" id="PS50830">
    <property type="entry name" value="TNASE_3"/>
    <property type="match status" value="1"/>
</dbReference>
<name>LCL3_PARBD</name>
<organism>
    <name type="scientific">Paracoccidioides brasiliensis (strain Pb18)</name>
    <dbReference type="NCBI Taxonomy" id="502780"/>
    <lineage>
        <taxon>Eukaryota</taxon>
        <taxon>Fungi</taxon>
        <taxon>Dikarya</taxon>
        <taxon>Ascomycota</taxon>
        <taxon>Pezizomycotina</taxon>
        <taxon>Eurotiomycetes</taxon>
        <taxon>Eurotiomycetidae</taxon>
        <taxon>Onygenales</taxon>
        <taxon>Ajellomycetaceae</taxon>
        <taxon>Paracoccidioides</taxon>
    </lineage>
</organism>
<keyword id="KW-0106">Calcium</keyword>
<keyword id="KW-0255">Endonuclease</keyword>
<keyword id="KW-0378">Hydrolase</keyword>
<keyword id="KW-0472">Membrane</keyword>
<keyword id="KW-0479">Metal-binding</keyword>
<keyword id="KW-0496">Mitochondrion</keyword>
<keyword id="KW-0540">Nuclease</keyword>
<keyword id="KW-1185">Reference proteome</keyword>
<keyword id="KW-0812">Transmembrane</keyword>
<keyword id="KW-1133">Transmembrane helix</keyword>
<protein>
    <recommendedName>
        <fullName>Probable endonuclease LCL3</fullName>
        <ecNumber>3.1.-.-</ecNumber>
    </recommendedName>
</protein>
<gene>
    <name type="primary">LCL3</name>
    <name type="ORF">PADG_07807</name>
</gene>